<name>ATPA_PRIM1</name>
<dbReference type="EC" id="7.1.2.2" evidence="1"/>
<dbReference type="EMBL" id="M20255">
    <property type="protein sequence ID" value="AAA82524.1"/>
    <property type="molecule type" value="Genomic_DNA"/>
</dbReference>
<dbReference type="EMBL" id="CP001983">
    <property type="protein sequence ID" value="ADE72128.1"/>
    <property type="molecule type" value="Genomic_DNA"/>
</dbReference>
<dbReference type="PIR" id="F31482">
    <property type="entry name" value="F31482"/>
</dbReference>
<dbReference type="RefSeq" id="WP_013059801.1">
    <property type="nucleotide sequence ID" value="NC_014019.1"/>
</dbReference>
<dbReference type="SMR" id="P17674"/>
<dbReference type="STRING" id="545693.BMQ_5150"/>
<dbReference type="KEGG" id="bmq:BMQ_5150"/>
<dbReference type="eggNOG" id="COG0056">
    <property type="taxonomic scope" value="Bacteria"/>
</dbReference>
<dbReference type="HOGENOM" id="CLU_010091_2_1_9"/>
<dbReference type="Proteomes" id="UP000000935">
    <property type="component" value="Chromosome"/>
</dbReference>
<dbReference type="GO" id="GO:0005886">
    <property type="term" value="C:plasma membrane"/>
    <property type="evidence" value="ECO:0007669"/>
    <property type="project" value="UniProtKB-SubCell"/>
</dbReference>
<dbReference type="GO" id="GO:0045259">
    <property type="term" value="C:proton-transporting ATP synthase complex"/>
    <property type="evidence" value="ECO:0007669"/>
    <property type="project" value="UniProtKB-KW"/>
</dbReference>
<dbReference type="GO" id="GO:0043531">
    <property type="term" value="F:ADP binding"/>
    <property type="evidence" value="ECO:0007669"/>
    <property type="project" value="TreeGrafter"/>
</dbReference>
<dbReference type="GO" id="GO:0005524">
    <property type="term" value="F:ATP binding"/>
    <property type="evidence" value="ECO:0007669"/>
    <property type="project" value="UniProtKB-UniRule"/>
</dbReference>
<dbReference type="GO" id="GO:0046933">
    <property type="term" value="F:proton-transporting ATP synthase activity, rotational mechanism"/>
    <property type="evidence" value="ECO:0007669"/>
    <property type="project" value="UniProtKB-UniRule"/>
</dbReference>
<dbReference type="CDD" id="cd18113">
    <property type="entry name" value="ATP-synt_F1_alpha_C"/>
    <property type="match status" value="1"/>
</dbReference>
<dbReference type="CDD" id="cd18116">
    <property type="entry name" value="ATP-synt_F1_alpha_N"/>
    <property type="match status" value="1"/>
</dbReference>
<dbReference type="CDD" id="cd01132">
    <property type="entry name" value="F1-ATPase_alpha_CD"/>
    <property type="match status" value="1"/>
</dbReference>
<dbReference type="FunFam" id="1.20.150.20:FF:000001">
    <property type="entry name" value="ATP synthase subunit alpha"/>
    <property type="match status" value="1"/>
</dbReference>
<dbReference type="FunFam" id="2.40.30.20:FF:000001">
    <property type="entry name" value="ATP synthase subunit alpha"/>
    <property type="match status" value="1"/>
</dbReference>
<dbReference type="FunFam" id="3.40.50.300:FF:000002">
    <property type="entry name" value="ATP synthase subunit alpha"/>
    <property type="match status" value="1"/>
</dbReference>
<dbReference type="Gene3D" id="2.40.30.20">
    <property type="match status" value="1"/>
</dbReference>
<dbReference type="Gene3D" id="1.20.150.20">
    <property type="entry name" value="ATP synthase alpha/beta chain, C-terminal domain"/>
    <property type="match status" value="1"/>
</dbReference>
<dbReference type="Gene3D" id="3.40.50.300">
    <property type="entry name" value="P-loop containing nucleotide triphosphate hydrolases"/>
    <property type="match status" value="1"/>
</dbReference>
<dbReference type="HAMAP" id="MF_01346">
    <property type="entry name" value="ATP_synth_alpha_bact"/>
    <property type="match status" value="1"/>
</dbReference>
<dbReference type="InterPro" id="IPR023366">
    <property type="entry name" value="ATP_synth_asu-like_sf"/>
</dbReference>
<dbReference type="InterPro" id="IPR000793">
    <property type="entry name" value="ATP_synth_asu_C"/>
</dbReference>
<dbReference type="InterPro" id="IPR038376">
    <property type="entry name" value="ATP_synth_asu_C_sf"/>
</dbReference>
<dbReference type="InterPro" id="IPR033732">
    <property type="entry name" value="ATP_synth_F1_a_nt-bd_dom"/>
</dbReference>
<dbReference type="InterPro" id="IPR005294">
    <property type="entry name" value="ATP_synth_F1_asu"/>
</dbReference>
<dbReference type="InterPro" id="IPR020003">
    <property type="entry name" value="ATPase_a/bsu_AS"/>
</dbReference>
<dbReference type="InterPro" id="IPR004100">
    <property type="entry name" value="ATPase_F1/V1/A1_a/bsu_N"/>
</dbReference>
<dbReference type="InterPro" id="IPR036121">
    <property type="entry name" value="ATPase_F1/V1/A1_a/bsu_N_sf"/>
</dbReference>
<dbReference type="InterPro" id="IPR000194">
    <property type="entry name" value="ATPase_F1/V1/A1_a/bsu_nucl-bd"/>
</dbReference>
<dbReference type="InterPro" id="IPR027417">
    <property type="entry name" value="P-loop_NTPase"/>
</dbReference>
<dbReference type="NCBIfam" id="TIGR00962">
    <property type="entry name" value="atpA"/>
    <property type="match status" value="1"/>
</dbReference>
<dbReference type="NCBIfam" id="NF009884">
    <property type="entry name" value="PRK13343.1"/>
    <property type="match status" value="1"/>
</dbReference>
<dbReference type="PANTHER" id="PTHR48082">
    <property type="entry name" value="ATP SYNTHASE SUBUNIT ALPHA, MITOCHONDRIAL"/>
    <property type="match status" value="1"/>
</dbReference>
<dbReference type="PANTHER" id="PTHR48082:SF2">
    <property type="entry name" value="ATP SYNTHASE SUBUNIT ALPHA, MITOCHONDRIAL"/>
    <property type="match status" value="1"/>
</dbReference>
<dbReference type="Pfam" id="PF00006">
    <property type="entry name" value="ATP-synt_ab"/>
    <property type="match status" value="1"/>
</dbReference>
<dbReference type="Pfam" id="PF00306">
    <property type="entry name" value="ATP-synt_ab_C"/>
    <property type="match status" value="1"/>
</dbReference>
<dbReference type="Pfam" id="PF02874">
    <property type="entry name" value="ATP-synt_ab_N"/>
    <property type="match status" value="1"/>
</dbReference>
<dbReference type="PIRSF" id="PIRSF039088">
    <property type="entry name" value="F_ATPase_subunit_alpha"/>
    <property type="match status" value="1"/>
</dbReference>
<dbReference type="SUPFAM" id="SSF47917">
    <property type="entry name" value="C-terminal domain of alpha and beta subunits of F1 ATP synthase"/>
    <property type="match status" value="1"/>
</dbReference>
<dbReference type="SUPFAM" id="SSF50615">
    <property type="entry name" value="N-terminal domain of alpha and beta subunits of F1 ATP synthase"/>
    <property type="match status" value="1"/>
</dbReference>
<dbReference type="SUPFAM" id="SSF52540">
    <property type="entry name" value="P-loop containing nucleoside triphosphate hydrolases"/>
    <property type="match status" value="1"/>
</dbReference>
<dbReference type="PROSITE" id="PS00152">
    <property type="entry name" value="ATPASE_ALPHA_BETA"/>
    <property type="match status" value="1"/>
</dbReference>
<sequence length="502" mass="54603">MSIKAEEISALIKQQIENYQSEIKVSDVGTVIQVGDGIARAHGLDNVMAGELVEFSNGVMGMAQNLEENNVGIIILGPYTEIREGDEVRRTGRIMEVPVGEQLIGRVVNSLGQPVDGLGPVETTKTRPIEGAAPGVMDRKSVHEPLQTGIKAIDALVPIGRGQRELIIGDRQTGKTSVAIDTILNQKDQDMVCIYVAIGQKESTVRNVVETLRKHGALDYTIVVTASASQPAPLLFLAPYAGVTMGEEFMYNGKHVLVIYDDLTKQASAYRELSLLLRRPPGREAYPGDVFYLHSRLLERAAKLSDAKGGGSLTALPFIETQAGDVSAYIPTNVISITDGQIFLQSDLFFSGVRPAINAGLSVSRVGGSAQIKAMKKVAGTLRLDLASYRELESFAQFGSDLDQATQAKLNRGARTVEILKQGLHKPLRVEKQVAVLYALTKGFLDDVPVSDITRFEDEYLTWLESNRKEVLESIRTTGGLPEAGLFESALEEFKKTFIASE</sequence>
<comment type="function">
    <text>Produces ATP from ADP in the presence of a proton gradient across the membrane. The alpha chain is a regulatory subunit.</text>
</comment>
<comment type="catalytic activity">
    <reaction evidence="1">
        <text>ATP + H2O + 4 H(+)(in) = ADP + phosphate + 5 H(+)(out)</text>
        <dbReference type="Rhea" id="RHEA:57720"/>
        <dbReference type="ChEBI" id="CHEBI:15377"/>
        <dbReference type="ChEBI" id="CHEBI:15378"/>
        <dbReference type="ChEBI" id="CHEBI:30616"/>
        <dbReference type="ChEBI" id="CHEBI:43474"/>
        <dbReference type="ChEBI" id="CHEBI:456216"/>
        <dbReference type="EC" id="7.1.2.2"/>
    </reaction>
</comment>
<comment type="subunit">
    <text evidence="1">F-type ATPases have 2 components, CF(1) - the catalytic core - and CF(0) - the membrane proton channel. CF(1) has five subunits: alpha(3), beta(3), gamma(1), delta(1), epsilon(1). CF(0) has three main subunits: a(1), b(2) and c(9-12). The alpha and beta chains form an alternating ring which encloses part of the gamma chain. CF(1) is attached to CF(0) by a central stalk formed by the gamma and epsilon chains, while a peripheral stalk is formed by the delta and b chains.</text>
</comment>
<comment type="subcellular location">
    <subcellularLocation>
        <location evidence="1">Cell membrane</location>
        <topology evidence="1">Peripheral membrane protein</topology>
    </subcellularLocation>
</comment>
<comment type="similarity">
    <text evidence="1">Belongs to the ATPase alpha/beta chains family.</text>
</comment>
<organism>
    <name type="scientific">Priestia megaterium (strain ATCC 12872 / QMB1551)</name>
    <name type="common">Bacillus megaterium</name>
    <dbReference type="NCBI Taxonomy" id="545693"/>
    <lineage>
        <taxon>Bacteria</taxon>
        <taxon>Bacillati</taxon>
        <taxon>Bacillota</taxon>
        <taxon>Bacilli</taxon>
        <taxon>Bacillales</taxon>
        <taxon>Bacillaceae</taxon>
        <taxon>Priestia</taxon>
    </lineage>
</organism>
<keyword id="KW-0066">ATP synthesis</keyword>
<keyword id="KW-0067">ATP-binding</keyword>
<keyword id="KW-1003">Cell membrane</keyword>
<keyword id="KW-0139">CF(1)</keyword>
<keyword id="KW-0375">Hydrogen ion transport</keyword>
<keyword id="KW-0406">Ion transport</keyword>
<keyword id="KW-0472">Membrane</keyword>
<keyword id="KW-0547">Nucleotide-binding</keyword>
<keyword id="KW-1185">Reference proteome</keyword>
<keyword id="KW-1278">Translocase</keyword>
<keyword id="KW-0813">Transport</keyword>
<reference key="1">
    <citation type="journal article" date="1989" name="J. Biol. Chem.">
        <title>Organization and sequence of the genes coding for the proton-translocating ATPase of Bacillus megaterium.</title>
        <authorList>
            <person name="Brusilow W.S.A."/>
            <person name="Scarpetta M.A."/>
            <person name="Hawthorne C.A."/>
            <person name="Clark W.P."/>
        </authorList>
    </citation>
    <scope>NUCLEOTIDE SEQUENCE [GENOMIC DNA]</scope>
</reference>
<reference key="2">
    <citation type="journal article" date="2011" name="J. Bacteriol.">
        <title>Genome sequences of the biotechnologically important Bacillus megaterium strains QM B1551 and DSM319.</title>
        <authorList>
            <person name="Eppinger M."/>
            <person name="Bunk B."/>
            <person name="Johns M.A."/>
            <person name="Edirisinghe J.N."/>
            <person name="Kutumbaka K.K."/>
            <person name="Koenig S.S."/>
            <person name="Creasy H.H."/>
            <person name="Rosovitz M.J."/>
            <person name="Riley D.R."/>
            <person name="Daugherty S."/>
            <person name="Martin M."/>
            <person name="Elbourne L.D."/>
            <person name="Paulsen I."/>
            <person name="Biedendieck R."/>
            <person name="Braun C."/>
            <person name="Grayburn S."/>
            <person name="Dhingra S."/>
            <person name="Lukyanchuk V."/>
            <person name="Ball B."/>
            <person name="Ul-Qamar R."/>
            <person name="Seibel J."/>
            <person name="Bremer E."/>
            <person name="Jahn D."/>
            <person name="Ravel J."/>
            <person name="Vary P.S."/>
        </authorList>
    </citation>
    <scope>NUCLEOTIDE SEQUENCE [LARGE SCALE GENOMIC DNA]</scope>
    <source>
        <strain>ATCC 12872 / DSM 1804 / QMB1551</strain>
    </source>
</reference>
<evidence type="ECO:0000255" key="1">
    <source>
        <dbReference type="HAMAP-Rule" id="MF_01346"/>
    </source>
</evidence>
<proteinExistence type="inferred from homology"/>
<accession>P17674</accession>
<accession>D5DWG3</accession>
<gene>
    <name evidence="1" type="primary">atpA</name>
    <name type="ordered locus">BMQ_5150</name>
</gene>
<protein>
    <recommendedName>
        <fullName evidence="1">ATP synthase subunit alpha</fullName>
        <ecNumber evidence="1">7.1.2.2</ecNumber>
    </recommendedName>
    <alternativeName>
        <fullName evidence="1">ATP synthase F1 sector subunit alpha</fullName>
    </alternativeName>
    <alternativeName>
        <fullName evidence="1">F-ATPase subunit alpha</fullName>
    </alternativeName>
</protein>
<feature type="chain" id="PRO_0000144315" description="ATP synthase subunit alpha">
    <location>
        <begin position="1"/>
        <end position="502"/>
    </location>
</feature>
<feature type="binding site" evidence="1">
    <location>
        <begin position="169"/>
        <end position="176"/>
    </location>
    <ligand>
        <name>ATP</name>
        <dbReference type="ChEBI" id="CHEBI:30616"/>
    </ligand>
</feature>
<feature type="site" description="Required for activity" evidence="1">
    <location>
        <position position="362"/>
    </location>
</feature>